<protein>
    <recommendedName>
        <fullName evidence="1">ATP-dependent Clp protease ATP-binding subunit ClpX</fullName>
    </recommendedName>
</protein>
<keyword id="KW-0067">ATP-binding</keyword>
<keyword id="KW-0143">Chaperone</keyword>
<keyword id="KW-0479">Metal-binding</keyword>
<keyword id="KW-0547">Nucleotide-binding</keyword>
<keyword id="KW-1185">Reference proteome</keyword>
<keyword id="KW-0862">Zinc</keyword>
<reference key="1">
    <citation type="journal article" date="2001" name="Infect. Immun.">
        <title>Disruption of the genes for ClpXP protease in Salmonella enterica serovar Typhimurium results in persistent infection in mice, and development of persistence requires endogenous gamma interferon and tumor necrosis factor alpha.</title>
        <authorList>
            <person name="Yamamoto T."/>
            <person name="Sashinami H."/>
            <person name="Takaya A."/>
            <person name="Tomoyasu T."/>
            <person name="Matsui H."/>
            <person name="Kikuchi Y."/>
            <person name="Hanawa T."/>
            <person name="Kamiya S."/>
            <person name="Nakane A."/>
        </authorList>
    </citation>
    <scope>NUCLEOTIDE SEQUENCE [GENOMIC DNA]</scope>
    <source>
        <strain>x3306</strain>
    </source>
</reference>
<reference key="2">
    <citation type="journal article" date="2001" name="Nature">
        <title>Complete genome sequence of Salmonella enterica serovar Typhimurium LT2.</title>
        <authorList>
            <person name="McClelland M."/>
            <person name="Sanderson K.E."/>
            <person name="Spieth J."/>
            <person name="Clifton S.W."/>
            <person name="Latreille P."/>
            <person name="Courtney L."/>
            <person name="Porwollik S."/>
            <person name="Ali J."/>
            <person name="Dante M."/>
            <person name="Du F."/>
            <person name="Hou S."/>
            <person name="Layman D."/>
            <person name="Leonard S."/>
            <person name="Nguyen C."/>
            <person name="Scott K."/>
            <person name="Holmes A."/>
            <person name="Grewal N."/>
            <person name="Mulvaney E."/>
            <person name="Ryan E."/>
            <person name="Sun H."/>
            <person name="Florea L."/>
            <person name="Miller W."/>
            <person name="Stoneking T."/>
            <person name="Nhan M."/>
            <person name="Waterston R."/>
            <person name="Wilson R.K."/>
        </authorList>
    </citation>
    <scope>NUCLEOTIDE SEQUENCE [LARGE SCALE GENOMIC DNA]</scope>
    <source>
        <strain>LT2 / SGSC1412 / ATCC 700720</strain>
    </source>
</reference>
<accession>Q8ZRC0</accession>
<accession>Q9LC06</accession>
<organism>
    <name type="scientific">Salmonella typhimurium (strain LT2 / SGSC1412 / ATCC 700720)</name>
    <dbReference type="NCBI Taxonomy" id="99287"/>
    <lineage>
        <taxon>Bacteria</taxon>
        <taxon>Pseudomonadati</taxon>
        <taxon>Pseudomonadota</taxon>
        <taxon>Gammaproteobacteria</taxon>
        <taxon>Enterobacterales</taxon>
        <taxon>Enterobacteriaceae</taxon>
        <taxon>Salmonella</taxon>
    </lineage>
</organism>
<name>CLPX_SALTY</name>
<evidence type="ECO:0000255" key="1">
    <source>
        <dbReference type="HAMAP-Rule" id="MF_00175"/>
    </source>
</evidence>
<evidence type="ECO:0000255" key="2">
    <source>
        <dbReference type="PROSITE-ProRule" id="PRU01250"/>
    </source>
</evidence>
<comment type="function">
    <text evidence="1">ATP-dependent specificity component of the Clp protease. It directs the protease to specific substrates. Can perform chaperone functions in the absence of ClpP.</text>
</comment>
<comment type="subunit">
    <text evidence="1">Component of the ClpX-ClpP complex. Forms a hexameric ring that, in the presence of ATP, binds to fourteen ClpP subunits assembled into a disk-like structure with a central cavity, resembling the structure of eukaryotic proteasomes.</text>
</comment>
<comment type="similarity">
    <text evidence="1">Belongs to the ClpX chaperone family.</text>
</comment>
<feature type="chain" id="PRO_0000160416" description="ATP-dependent Clp protease ATP-binding subunit ClpX">
    <location>
        <begin position="1"/>
        <end position="423"/>
    </location>
</feature>
<feature type="domain" description="ClpX-type ZB" evidence="2">
    <location>
        <begin position="2"/>
        <end position="56"/>
    </location>
</feature>
<feature type="binding site" evidence="2">
    <location>
        <position position="15"/>
    </location>
    <ligand>
        <name>Zn(2+)</name>
        <dbReference type="ChEBI" id="CHEBI:29105"/>
    </ligand>
</feature>
<feature type="binding site" evidence="2">
    <location>
        <position position="18"/>
    </location>
    <ligand>
        <name>Zn(2+)</name>
        <dbReference type="ChEBI" id="CHEBI:29105"/>
    </ligand>
</feature>
<feature type="binding site" evidence="2">
    <location>
        <position position="37"/>
    </location>
    <ligand>
        <name>Zn(2+)</name>
        <dbReference type="ChEBI" id="CHEBI:29105"/>
    </ligand>
</feature>
<feature type="binding site" evidence="2">
    <location>
        <position position="40"/>
    </location>
    <ligand>
        <name>Zn(2+)</name>
        <dbReference type="ChEBI" id="CHEBI:29105"/>
    </ligand>
</feature>
<feature type="binding site" evidence="1">
    <location>
        <begin position="120"/>
        <end position="127"/>
    </location>
    <ligand>
        <name>ATP</name>
        <dbReference type="ChEBI" id="CHEBI:30616"/>
    </ligand>
</feature>
<gene>
    <name evidence="1" type="primary">clpX</name>
    <name type="ordered locus">STM0449</name>
</gene>
<dbReference type="EMBL" id="AB033628">
    <property type="protein sequence ID" value="BAA94669.1"/>
    <property type="molecule type" value="Genomic_DNA"/>
</dbReference>
<dbReference type="EMBL" id="AE006468">
    <property type="protein sequence ID" value="AAL19404.1"/>
    <property type="molecule type" value="Genomic_DNA"/>
</dbReference>
<dbReference type="RefSeq" id="NP_459445.1">
    <property type="nucleotide sequence ID" value="NC_003197.2"/>
</dbReference>
<dbReference type="RefSeq" id="WP_000130314.1">
    <property type="nucleotide sequence ID" value="NC_003197.2"/>
</dbReference>
<dbReference type="SMR" id="Q8ZRC0"/>
<dbReference type="STRING" id="99287.STM0449"/>
<dbReference type="PaxDb" id="99287-STM0449"/>
<dbReference type="GeneID" id="1251969"/>
<dbReference type="KEGG" id="stm:STM0449"/>
<dbReference type="PATRIC" id="fig|99287.12.peg.481"/>
<dbReference type="HOGENOM" id="CLU_014218_8_2_6"/>
<dbReference type="OMA" id="LDTMFDL"/>
<dbReference type="PhylomeDB" id="Q8ZRC0"/>
<dbReference type="BioCyc" id="SENT99287:STM0449-MONOMER"/>
<dbReference type="BRENDA" id="3.4.21.92">
    <property type="organism ID" value="2169"/>
</dbReference>
<dbReference type="Proteomes" id="UP000001014">
    <property type="component" value="Chromosome"/>
</dbReference>
<dbReference type="GO" id="GO:0009376">
    <property type="term" value="C:HslUV protease complex"/>
    <property type="evidence" value="ECO:0000318"/>
    <property type="project" value="GO_Central"/>
</dbReference>
<dbReference type="GO" id="GO:0005524">
    <property type="term" value="F:ATP binding"/>
    <property type="evidence" value="ECO:0000318"/>
    <property type="project" value="GO_Central"/>
</dbReference>
<dbReference type="GO" id="GO:0016887">
    <property type="term" value="F:ATP hydrolysis activity"/>
    <property type="evidence" value="ECO:0000318"/>
    <property type="project" value="GO_Central"/>
</dbReference>
<dbReference type="GO" id="GO:0140662">
    <property type="term" value="F:ATP-dependent protein folding chaperone"/>
    <property type="evidence" value="ECO:0007669"/>
    <property type="project" value="InterPro"/>
</dbReference>
<dbReference type="GO" id="GO:0046983">
    <property type="term" value="F:protein dimerization activity"/>
    <property type="evidence" value="ECO:0007669"/>
    <property type="project" value="InterPro"/>
</dbReference>
<dbReference type="GO" id="GO:0051082">
    <property type="term" value="F:unfolded protein binding"/>
    <property type="evidence" value="ECO:0007669"/>
    <property type="project" value="UniProtKB-UniRule"/>
</dbReference>
<dbReference type="GO" id="GO:0008270">
    <property type="term" value="F:zinc ion binding"/>
    <property type="evidence" value="ECO:0007669"/>
    <property type="project" value="InterPro"/>
</dbReference>
<dbReference type="GO" id="GO:0051301">
    <property type="term" value="P:cell division"/>
    <property type="evidence" value="ECO:0000318"/>
    <property type="project" value="GO_Central"/>
</dbReference>
<dbReference type="GO" id="GO:0051603">
    <property type="term" value="P:proteolysis involved in protein catabolic process"/>
    <property type="evidence" value="ECO:0000318"/>
    <property type="project" value="GO_Central"/>
</dbReference>
<dbReference type="CDD" id="cd19497">
    <property type="entry name" value="RecA-like_ClpX"/>
    <property type="match status" value="1"/>
</dbReference>
<dbReference type="FunFam" id="1.10.8.60:FF:000002">
    <property type="entry name" value="ATP-dependent Clp protease ATP-binding subunit ClpX"/>
    <property type="match status" value="1"/>
</dbReference>
<dbReference type="FunFam" id="3.40.50.300:FF:000005">
    <property type="entry name" value="ATP-dependent Clp protease ATP-binding subunit ClpX"/>
    <property type="match status" value="1"/>
</dbReference>
<dbReference type="Gene3D" id="1.10.8.60">
    <property type="match status" value="1"/>
</dbReference>
<dbReference type="Gene3D" id="6.20.220.10">
    <property type="entry name" value="ClpX chaperone, C4-type zinc finger domain"/>
    <property type="match status" value="1"/>
</dbReference>
<dbReference type="Gene3D" id="3.40.50.300">
    <property type="entry name" value="P-loop containing nucleotide triphosphate hydrolases"/>
    <property type="match status" value="1"/>
</dbReference>
<dbReference type="HAMAP" id="MF_00175">
    <property type="entry name" value="ClpX"/>
    <property type="match status" value="1"/>
</dbReference>
<dbReference type="InterPro" id="IPR003593">
    <property type="entry name" value="AAA+_ATPase"/>
</dbReference>
<dbReference type="InterPro" id="IPR050052">
    <property type="entry name" value="ATP-dep_Clp_protease_ClpX"/>
</dbReference>
<dbReference type="InterPro" id="IPR003959">
    <property type="entry name" value="ATPase_AAA_core"/>
</dbReference>
<dbReference type="InterPro" id="IPR019489">
    <property type="entry name" value="Clp_ATPase_C"/>
</dbReference>
<dbReference type="InterPro" id="IPR004487">
    <property type="entry name" value="Clp_protease_ATP-bd_su_ClpX"/>
</dbReference>
<dbReference type="InterPro" id="IPR046425">
    <property type="entry name" value="ClpX_bact"/>
</dbReference>
<dbReference type="InterPro" id="IPR027417">
    <property type="entry name" value="P-loop_NTPase"/>
</dbReference>
<dbReference type="InterPro" id="IPR010603">
    <property type="entry name" value="Znf_CppX_C4"/>
</dbReference>
<dbReference type="InterPro" id="IPR038366">
    <property type="entry name" value="Znf_CppX_C4_sf"/>
</dbReference>
<dbReference type="NCBIfam" id="TIGR00382">
    <property type="entry name" value="clpX"/>
    <property type="match status" value="1"/>
</dbReference>
<dbReference type="NCBIfam" id="NF003745">
    <property type="entry name" value="PRK05342.1"/>
    <property type="match status" value="1"/>
</dbReference>
<dbReference type="PANTHER" id="PTHR48102:SF7">
    <property type="entry name" value="ATP-DEPENDENT CLP PROTEASE ATP-BINDING SUBUNIT CLPX-LIKE, MITOCHONDRIAL"/>
    <property type="match status" value="1"/>
</dbReference>
<dbReference type="PANTHER" id="PTHR48102">
    <property type="entry name" value="ATP-DEPENDENT CLP PROTEASE ATP-BINDING SUBUNIT CLPX-LIKE, MITOCHONDRIAL-RELATED"/>
    <property type="match status" value="1"/>
</dbReference>
<dbReference type="Pfam" id="PF07724">
    <property type="entry name" value="AAA_2"/>
    <property type="match status" value="1"/>
</dbReference>
<dbReference type="Pfam" id="PF10431">
    <property type="entry name" value="ClpB_D2-small"/>
    <property type="match status" value="1"/>
</dbReference>
<dbReference type="Pfam" id="PF06689">
    <property type="entry name" value="zf-C4_ClpX"/>
    <property type="match status" value="1"/>
</dbReference>
<dbReference type="SMART" id="SM00382">
    <property type="entry name" value="AAA"/>
    <property type="match status" value="1"/>
</dbReference>
<dbReference type="SMART" id="SM01086">
    <property type="entry name" value="ClpB_D2-small"/>
    <property type="match status" value="1"/>
</dbReference>
<dbReference type="SMART" id="SM00994">
    <property type="entry name" value="zf-C4_ClpX"/>
    <property type="match status" value="1"/>
</dbReference>
<dbReference type="SUPFAM" id="SSF57716">
    <property type="entry name" value="Glucocorticoid receptor-like (DNA-binding domain)"/>
    <property type="match status" value="1"/>
</dbReference>
<dbReference type="SUPFAM" id="SSF52540">
    <property type="entry name" value="P-loop containing nucleoside triphosphate hydrolases"/>
    <property type="match status" value="1"/>
</dbReference>
<dbReference type="PROSITE" id="PS51902">
    <property type="entry name" value="CLPX_ZB"/>
    <property type="match status" value="1"/>
</dbReference>
<proteinExistence type="inferred from homology"/>
<sequence>MTDKRKDGSGKLLYCSFCGKSQHEVRKLIAGPSVYICDECVDLCNDIIREEIKEVAPHRERSALPTPHEIRTHLDDYVIGQEQAKKVLAVAVYNHYKRLRNGDTSNGVELGKSNILLIGPTGSGKTLLAETLARLLDVPFTMADATTLTEAGYVGEDVENIIQKLLQKCDYDVQKAQRGIVYIDEIDKISRKSDNPSITRDVSGEGVQQALLKLIEGTVAAVPPQGGRKHPQQEFLQVDTSKILFICGGAFAGLDKVIANRVETGSGIGFGATVKAKSDKASEGELLSQVEPEDLIKFGLIPEFIGRLPVVATLNELSEEALIQILKEPKNALTKQYQALFNLEGVDLEFRDEALDAIARKAMARKTGARGLRSIVEAALLDTMYDLPSMEDVEKVVIDESVIAGQSKPLLIYGKPEAQASGE</sequence>